<gene>
    <name evidence="1" type="primary">mraY</name>
    <name type="ordered locus">XCV0828</name>
</gene>
<sequence>MLLELARWLQQLESLFGLFNYLTFRGILAALTALFLSLWMGPAVIRKLAQFKGGQPIRQDGPQTHFSKAGTPTMGGSLILLTVTLSVLLWGDLRNRYVWLVLAVMICFGAIGWYDDWIKIVKRDPNGLKSRWKYLLQSIFGLAAGLFLYYTADVPAAITFYIPMFKSIALPLAGVSFVVIAYFWIVGFSNAVNLTDGLDGLAIMPTVLVACALGVFAYASGNVVFAEYLKIPLIPGAGELIIICSAIAGAGLGFLWFNTYPAMVFMGDIGALSLGAVLGTIAVIVRQEMVLVIMGGVFVIETLSVMIQVVSFKLTGKRVFRMAPIHHHFELKGWPEPRVIVRFWIISVVLVLIGLATLKVR</sequence>
<reference key="1">
    <citation type="journal article" date="2005" name="J. Bacteriol.">
        <title>Insights into genome plasticity and pathogenicity of the plant pathogenic Bacterium Xanthomonas campestris pv. vesicatoria revealed by the complete genome sequence.</title>
        <authorList>
            <person name="Thieme F."/>
            <person name="Koebnik R."/>
            <person name="Bekel T."/>
            <person name="Berger C."/>
            <person name="Boch J."/>
            <person name="Buettner D."/>
            <person name="Caldana C."/>
            <person name="Gaigalat L."/>
            <person name="Goesmann A."/>
            <person name="Kay S."/>
            <person name="Kirchner O."/>
            <person name="Lanz C."/>
            <person name="Linke B."/>
            <person name="McHardy A.C."/>
            <person name="Meyer F."/>
            <person name="Mittenhuber G."/>
            <person name="Nies D.H."/>
            <person name="Niesbach-Kloesgen U."/>
            <person name="Patschkowski T."/>
            <person name="Rueckert C."/>
            <person name="Rupp O."/>
            <person name="Schneiker S."/>
            <person name="Schuster S.C."/>
            <person name="Vorhoelter F.J."/>
            <person name="Weber E."/>
            <person name="Puehler A."/>
            <person name="Bonas U."/>
            <person name="Bartels D."/>
            <person name="Kaiser O."/>
        </authorList>
    </citation>
    <scope>NUCLEOTIDE SEQUENCE [LARGE SCALE GENOMIC DNA]</scope>
    <source>
        <strain>85-10</strain>
    </source>
</reference>
<comment type="function">
    <text evidence="1">Catalyzes the initial step of the lipid cycle reactions in the biosynthesis of the cell wall peptidoglycan: transfers peptidoglycan precursor phospho-MurNAc-pentapeptide from UDP-MurNAc-pentapeptide onto the lipid carrier undecaprenyl phosphate, yielding undecaprenyl-pyrophosphoryl-MurNAc-pentapeptide, known as lipid I.</text>
</comment>
<comment type="catalytic activity">
    <reaction evidence="1">
        <text>UDP-N-acetyl-alpha-D-muramoyl-L-alanyl-gamma-D-glutamyl-meso-2,6-diaminopimeloyl-D-alanyl-D-alanine + di-trans,octa-cis-undecaprenyl phosphate = di-trans,octa-cis-undecaprenyl diphospho-N-acetyl-alpha-D-muramoyl-L-alanyl-D-glutamyl-meso-2,6-diaminopimeloyl-D-alanyl-D-alanine + UMP</text>
        <dbReference type="Rhea" id="RHEA:28386"/>
        <dbReference type="ChEBI" id="CHEBI:57865"/>
        <dbReference type="ChEBI" id="CHEBI:60392"/>
        <dbReference type="ChEBI" id="CHEBI:61386"/>
        <dbReference type="ChEBI" id="CHEBI:61387"/>
        <dbReference type="EC" id="2.7.8.13"/>
    </reaction>
</comment>
<comment type="cofactor">
    <cofactor evidence="1">
        <name>Mg(2+)</name>
        <dbReference type="ChEBI" id="CHEBI:18420"/>
    </cofactor>
</comment>
<comment type="pathway">
    <text evidence="1">Cell wall biogenesis; peptidoglycan biosynthesis.</text>
</comment>
<comment type="subcellular location">
    <subcellularLocation>
        <location evidence="1">Cell inner membrane</location>
        <topology evidence="1">Multi-pass membrane protein</topology>
    </subcellularLocation>
</comment>
<comment type="similarity">
    <text evidence="1">Belongs to the glycosyltransferase 4 family. MraY subfamily.</text>
</comment>
<keyword id="KW-0131">Cell cycle</keyword>
<keyword id="KW-0132">Cell division</keyword>
<keyword id="KW-0997">Cell inner membrane</keyword>
<keyword id="KW-1003">Cell membrane</keyword>
<keyword id="KW-0133">Cell shape</keyword>
<keyword id="KW-0961">Cell wall biogenesis/degradation</keyword>
<keyword id="KW-0460">Magnesium</keyword>
<keyword id="KW-0472">Membrane</keyword>
<keyword id="KW-0479">Metal-binding</keyword>
<keyword id="KW-0573">Peptidoglycan synthesis</keyword>
<keyword id="KW-0808">Transferase</keyword>
<keyword id="KW-0812">Transmembrane</keyword>
<keyword id="KW-1133">Transmembrane helix</keyword>
<feature type="chain" id="PRO_0000235502" description="Phospho-N-acetylmuramoyl-pentapeptide-transferase">
    <location>
        <begin position="1"/>
        <end position="361"/>
    </location>
</feature>
<feature type="transmembrane region" description="Helical" evidence="1">
    <location>
        <begin position="25"/>
        <end position="45"/>
    </location>
</feature>
<feature type="transmembrane region" description="Helical" evidence="1">
    <location>
        <begin position="73"/>
        <end position="93"/>
    </location>
</feature>
<feature type="transmembrane region" description="Helical" evidence="1">
    <location>
        <begin position="98"/>
        <end position="118"/>
    </location>
</feature>
<feature type="transmembrane region" description="Helical" evidence="1">
    <location>
        <begin position="139"/>
        <end position="159"/>
    </location>
</feature>
<feature type="transmembrane region" description="Helical" evidence="1">
    <location>
        <begin position="168"/>
        <end position="188"/>
    </location>
</feature>
<feature type="transmembrane region" description="Helical" evidence="1">
    <location>
        <begin position="200"/>
        <end position="220"/>
    </location>
</feature>
<feature type="transmembrane region" description="Helical" evidence="1">
    <location>
        <begin position="237"/>
        <end position="257"/>
    </location>
</feature>
<feature type="transmembrane region" description="Helical" evidence="1">
    <location>
        <begin position="264"/>
        <end position="284"/>
    </location>
</feature>
<feature type="transmembrane region" description="Helical" evidence="1">
    <location>
        <begin position="290"/>
        <end position="310"/>
    </location>
</feature>
<feature type="transmembrane region" description="Helical" evidence="1">
    <location>
        <begin position="339"/>
        <end position="359"/>
    </location>
</feature>
<proteinExistence type="inferred from homology"/>
<name>MRAY_XANE5</name>
<organism>
    <name type="scientific">Xanthomonas euvesicatoria pv. vesicatoria (strain 85-10)</name>
    <name type="common">Xanthomonas campestris pv. vesicatoria</name>
    <dbReference type="NCBI Taxonomy" id="316273"/>
    <lineage>
        <taxon>Bacteria</taxon>
        <taxon>Pseudomonadati</taxon>
        <taxon>Pseudomonadota</taxon>
        <taxon>Gammaproteobacteria</taxon>
        <taxon>Lysobacterales</taxon>
        <taxon>Lysobacteraceae</taxon>
        <taxon>Xanthomonas</taxon>
    </lineage>
</organism>
<evidence type="ECO:0000255" key="1">
    <source>
        <dbReference type="HAMAP-Rule" id="MF_00038"/>
    </source>
</evidence>
<accession>Q3BXF4</accession>
<dbReference type="EC" id="2.7.8.13" evidence="1"/>
<dbReference type="EMBL" id="AM039952">
    <property type="protein sequence ID" value="CAJ22459.1"/>
    <property type="molecule type" value="Genomic_DNA"/>
</dbReference>
<dbReference type="RefSeq" id="WP_011346422.1">
    <property type="nucleotide sequence ID" value="NZ_CP017190.1"/>
</dbReference>
<dbReference type="SMR" id="Q3BXF4"/>
<dbReference type="STRING" id="456327.BJD11_18655"/>
<dbReference type="KEGG" id="xcv:XCV0828"/>
<dbReference type="eggNOG" id="COG0472">
    <property type="taxonomic scope" value="Bacteria"/>
</dbReference>
<dbReference type="HOGENOM" id="CLU_023982_0_0_6"/>
<dbReference type="UniPathway" id="UPA00219"/>
<dbReference type="Proteomes" id="UP000007069">
    <property type="component" value="Chromosome"/>
</dbReference>
<dbReference type="GO" id="GO:0005886">
    <property type="term" value="C:plasma membrane"/>
    <property type="evidence" value="ECO:0007669"/>
    <property type="project" value="UniProtKB-SubCell"/>
</dbReference>
<dbReference type="GO" id="GO:0046872">
    <property type="term" value="F:metal ion binding"/>
    <property type="evidence" value="ECO:0007669"/>
    <property type="project" value="UniProtKB-KW"/>
</dbReference>
<dbReference type="GO" id="GO:0008963">
    <property type="term" value="F:phospho-N-acetylmuramoyl-pentapeptide-transferase activity"/>
    <property type="evidence" value="ECO:0007669"/>
    <property type="project" value="UniProtKB-UniRule"/>
</dbReference>
<dbReference type="GO" id="GO:0051992">
    <property type="term" value="F:UDP-N-acetylmuramoyl-L-alanyl-D-glutamyl-meso-2,6-diaminopimelyl-D-alanyl-D-alanine:undecaprenyl-phosphate transferase activity"/>
    <property type="evidence" value="ECO:0007669"/>
    <property type="project" value="RHEA"/>
</dbReference>
<dbReference type="GO" id="GO:0051301">
    <property type="term" value="P:cell division"/>
    <property type="evidence" value="ECO:0007669"/>
    <property type="project" value="UniProtKB-KW"/>
</dbReference>
<dbReference type="GO" id="GO:0071555">
    <property type="term" value="P:cell wall organization"/>
    <property type="evidence" value="ECO:0007669"/>
    <property type="project" value="UniProtKB-KW"/>
</dbReference>
<dbReference type="GO" id="GO:0009252">
    <property type="term" value="P:peptidoglycan biosynthetic process"/>
    <property type="evidence" value="ECO:0007669"/>
    <property type="project" value="UniProtKB-UniRule"/>
</dbReference>
<dbReference type="GO" id="GO:0008360">
    <property type="term" value="P:regulation of cell shape"/>
    <property type="evidence" value="ECO:0007669"/>
    <property type="project" value="UniProtKB-KW"/>
</dbReference>
<dbReference type="CDD" id="cd06852">
    <property type="entry name" value="GT_MraY"/>
    <property type="match status" value="1"/>
</dbReference>
<dbReference type="HAMAP" id="MF_00038">
    <property type="entry name" value="MraY"/>
    <property type="match status" value="1"/>
</dbReference>
<dbReference type="InterPro" id="IPR000715">
    <property type="entry name" value="Glycosyl_transferase_4"/>
</dbReference>
<dbReference type="InterPro" id="IPR003524">
    <property type="entry name" value="PNAcMuramoyl-5peptid_Trfase"/>
</dbReference>
<dbReference type="InterPro" id="IPR018480">
    <property type="entry name" value="PNAcMuramoyl-5peptid_Trfase_CS"/>
</dbReference>
<dbReference type="NCBIfam" id="TIGR00445">
    <property type="entry name" value="mraY"/>
    <property type="match status" value="1"/>
</dbReference>
<dbReference type="PANTHER" id="PTHR22926">
    <property type="entry name" value="PHOSPHO-N-ACETYLMURAMOYL-PENTAPEPTIDE-TRANSFERASE"/>
    <property type="match status" value="1"/>
</dbReference>
<dbReference type="PANTHER" id="PTHR22926:SF5">
    <property type="entry name" value="PHOSPHO-N-ACETYLMURAMOYL-PENTAPEPTIDE-TRANSFERASE HOMOLOG"/>
    <property type="match status" value="1"/>
</dbReference>
<dbReference type="Pfam" id="PF00953">
    <property type="entry name" value="Glycos_transf_4"/>
    <property type="match status" value="1"/>
</dbReference>
<dbReference type="PROSITE" id="PS01347">
    <property type="entry name" value="MRAY_1"/>
    <property type="match status" value="1"/>
</dbReference>
<dbReference type="PROSITE" id="PS01348">
    <property type="entry name" value="MRAY_2"/>
    <property type="match status" value="1"/>
</dbReference>
<protein>
    <recommendedName>
        <fullName evidence="1">Phospho-N-acetylmuramoyl-pentapeptide-transferase</fullName>
        <ecNumber evidence="1">2.7.8.13</ecNumber>
    </recommendedName>
    <alternativeName>
        <fullName evidence="1">UDP-MurNAc-pentapeptide phosphotransferase</fullName>
    </alternativeName>
</protein>